<protein>
    <recommendedName>
        <fullName>Probable protein phosphatase 2C 72</fullName>
        <shortName>AtPP2C72</shortName>
        <ecNumber>3.1.3.16</ecNumber>
    </recommendedName>
</protein>
<accession>Q9XGZ9</accession>
<name>P2C72_ARATH</name>
<dbReference type="EC" id="3.1.3.16"/>
<dbReference type="EMBL" id="AF149413">
    <property type="protein sequence ID" value="AAD40128.1"/>
    <property type="status" value="ALT_SEQ"/>
    <property type="molecule type" value="Genomic_DNA"/>
</dbReference>
<dbReference type="EMBL" id="CP002688">
    <property type="protein sequence ID" value="AED93513.1"/>
    <property type="molecule type" value="Genomic_DNA"/>
</dbReference>
<dbReference type="RefSeq" id="NP_197973.2">
    <property type="nucleotide sequence ID" value="NM_122502.3"/>
</dbReference>
<dbReference type="SMR" id="Q9XGZ9"/>
<dbReference type="FunCoup" id="Q9XGZ9">
    <property type="interactions" value="393"/>
</dbReference>
<dbReference type="STRING" id="3702.Q9XGZ9"/>
<dbReference type="iPTMnet" id="Q9XGZ9"/>
<dbReference type="PaxDb" id="3702-AT5G26010.1"/>
<dbReference type="EnsemblPlants" id="AT5G26010.1">
    <property type="protein sequence ID" value="AT5G26010.1"/>
    <property type="gene ID" value="AT5G26010"/>
</dbReference>
<dbReference type="GeneID" id="832670"/>
<dbReference type="Gramene" id="AT5G26010.1">
    <property type="protein sequence ID" value="AT5G26010.1"/>
    <property type="gene ID" value="AT5G26010"/>
</dbReference>
<dbReference type="KEGG" id="ath:AT5G26010"/>
<dbReference type="Araport" id="AT5G26010"/>
<dbReference type="TAIR" id="AT5G26010"/>
<dbReference type="eggNOG" id="KOG0698">
    <property type="taxonomic scope" value="Eukaryota"/>
</dbReference>
<dbReference type="HOGENOM" id="CLU_013173_6_0_1"/>
<dbReference type="InParanoid" id="Q9XGZ9"/>
<dbReference type="OMA" id="VWAADSE"/>
<dbReference type="PhylomeDB" id="Q9XGZ9"/>
<dbReference type="PRO" id="PR:Q9XGZ9"/>
<dbReference type="Proteomes" id="UP000006548">
    <property type="component" value="Chromosome 5"/>
</dbReference>
<dbReference type="ExpressionAtlas" id="Q9XGZ9">
    <property type="expression patterns" value="baseline and differential"/>
</dbReference>
<dbReference type="GO" id="GO:0046872">
    <property type="term" value="F:metal ion binding"/>
    <property type="evidence" value="ECO:0007669"/>
    <property type="project" value="UniProtKB-KW"/>
</dbReference>
<dbReference type="GO" id="GO:0004722">
    <property type="term" value="F:protein serine/threonine phosphatase activity"/>
    <property type="evidence" value="ECO:0007669"/>
    <property type="project" value="UniProtKB-EC"/>
</dbReference>
<dbReference type="CDD" id="cd00143">
    <property type="entry name" value="PP2Cc"/>
    <property type="match status" value="1"/>
</dbReference>
<dbReference type="Gene3D" id="3.60.40.10">
    <property type="entry name" value="PPM-type phosphatase domain"/>
    <property type="match status" value="1"/>
</dbReference>
<dbReference type="InterPro" id="IPR015655">
    <property type="entry name" value="PP2C"/>
</dbReference>
<dbReference type="InterPro" id="IPR036457">
    <property type="entry name" value="PPM-type-like_dom_sf"/>
</dbReference>
<dbReference type="InterPro" id="IPR001932">
    <property type="entry name" value="PPM-type_phosphatase-like_dom"/>
</dbReference>
<dbReference type="PANTHER" id="PTHR47992">
    <property type="entry name" value="PROTEIN PHOSPHATASE"/>
    <property type="match status" value="1"/>
</dbReference>
<dbReference type="Pfam" id="PF00481">
    <property type="entry name" value="PP2C"/>
    <property type="match status" value="1"/>
</dbReference>
<dbReference type="SMART" id="SM00332">
    <property type="entry name" value="PP2Cc"/>
    <property type="match status" value="1"/>
</dbReference>
<dbReference type="SUPFAM" id="SSF81606">
    <property type="entry name" value="PP2C-like"/>
    <property type="match status" value="1"/>
</dbReference>
<dbReference type="PROSITE" id="PS51746">
    <property type="entry name" value="PPM_2"/>
    <property type="match status" value="1"/>
</dbReference>
<keyword id="KW-0378">Hydrolase</keyword>
<keyword id="KW-0460">Magnesium</keyword>
<keyword id="KW-0464">Manganese</keyword>
<keyword id="KW-0479">Metal-binding</keyword>
<keyword id="KW-0904">Protein phosphatase</keyword>
<keyword id="KW-1185">Reference proteome</keyword>
<reference key="1">
    <citation type="journal article" date="2000" name="Nature">
        <title>Sequence and analysis of chromosome 5 of the plant Arabidopsis thaliana.</title>
        <authorList>
            <person name="Tabata S."/>
            <person name="Kaneko T."/>
            <person name="Nakamura Y."/>
            <person name="Kotani H."/>
            <person name="Kato T."/>
            <person name="Asamizu E."/>
            <person name="Miyajima N."/>
            <person name="Sasamoto S."/>
            <person name="Kimura T."/>
            <person name="Hosouchi T."/>
            <person name="Kawashima K."/>
            <person name="Kohara M."/>
            <person name="Matsumoto M."/>
            <person name="Matsuno A."/>
            <person name="Muraki A."/>
            <person name="Nakayama S."/>
            <person name="Nakazaki N."/>
            <person name="Naruo K."/>
            <person name="Okumura S."/>
            <person name="Shinpo S."/>
            <person name="Takeuchi C."/>
            <person name="Wada T."/>
            <person name="Watanabe A."/>
            <person name="Yamada M."/>
            <person name="Yasuda M."/>
            <person name="Sato S."/>
            <person name="de la Bastide M."/>
            <person name="Huang E."/>
            <person name="Spiegel L."/>
            <person name="Gnoj L."/>
            <person name="O'Shaughnessy A."/>
            <person name="Preston R."/>
            <person name="Habermann K."/>
            <person name="Murray J."/>
            <person name="Johnson D."/>
            <person name="Rohlfing T."/>
            <person name="Nelson J."/>
            <person name="Stoneking T."/>
            <person name="Pepin K."/>
            <person name="Spieth J."/>
            <person name="Sekhon M."/>
            <person name="Armstrong J."/>
            <person name="Becker M."/>
            <person name="Belter E."/>
            <person name="Cordum H."/>
            <person name="Cordes M."/>
            <person name="Courtney L."/>
            <person name="Courtney W."/>
            <person name="Dante M."/>
            <person name="Du H."/>
            <person name="Edwards J."/>
            <person name="Fryman J."/>
            <person name="Haakensen B."/>
            <person name="Lamar E."/>
            <person name="Latreille P."/>
            <person name="Leonard S."/>
            <person name="Meyer R."/>
            <person name="Mulvaney E."/>
            <person name="Ozersky P."/>
            <person name="Riley A."/>
            <person name="Strowmatt C."/>
            <person name="Wagner-McPherson C."/>
            <person name="Wollam A."/>
            <person name="Yoakum M."/>
            <person name="Bell M."/>
            <person name="Dedhia N."/>
            <person name="Parnell L."/>
            <person name="Shah R."/>
            <person name="Rodriguez M."/>
            <person name="Hoon See L."/>
            <person name="Vil D."/>
            <person name="Baker J."/>
            <person name="Kirchoff K."/>
            <person name="Toth K."/>
            <person name="King L."/>
            <person name="Bahret A."/>
            <person name="Miller B."/>
            <person name="Marra M.A."/>
            <person name="Martienssen R."/>
            <person name="McCombie W.R."/>
            <person name="Wilson R.K."/>
            <person name="Murphy G."/>
            <person name="Bancroft I."/>
            <person name="Volckaert G."/>
            <person name="Wambutt R."/>
            <person name="Duesterhoeft A."/>
            <person name="Stiekema W."/>
            <person name="Pohl T."/>
            <person name="Entian K.-D."/>
            <person name="Terryn N."/>
            <person name="Hartley N."/>
            <person name="Bent E."/>
            <person name="Johnson S."/>
            <person name="Langham S.-A."/>
            <person name="McCullagh B."/>
            <person name="Robben J."/>
            <person name="Grymonprez B."/>
            <person name="Zimmermann W."/>
            <person name="Ramsperger U."/>
            <person name="Wedler H."/>
            <person name="Balke K."/>
            <person name="Wedler E."/>
            <person name="Peters S."/>
            <person name="van Staveren M."/>
            <person name="Dirkse W."/>
            <person name="Mooijman P."/>
            <person name="Klein Lankhorst R."/>
            <person name="Weitzenegger T."/>
            <person name="Bothe G."/>
            <person name="Rose M."/>
            <person name="Hauf J."/>
            <person name="Berneiser S."/>
            <person name="Hempel S."/>
            <person name="Feldpausch M."/>
            <person name="Lamberth S."/>
            <person name="Villarroel R."/>
            <person name="Gielen J."/>
            <person name="Ardiles W."/>
            <person name="Bents O."/>
            <person name="Lemcke K."/>
            <person name="Kolesov G."/>
            <person name="Mayer K.F.X."/>
            <person name="Rudd S."/>
            <person name="Schoof H."/>
            <person name="Schueller C."/>
            <person name="Zaccaria P."/>
            <person name="Mewes H.-W."/>
            <person name="Bevan M."/>
            <person name="Fransz P.F."/>
        </authorList>
    </citation>
    <scope>NUCLEOTIDE SEQUENCE [LARGE SCALE GENOMIC DNA]</scope>
    <source>
        <strain>cv. Columbia</strain>
    </source>
</reference>
<reference key="2">
    <citation type="journal article" date="2017" name="Plant J.">
        <title>Araport11: a complete reannotation of the Arabidopsis thaliana reference genome.</title>
        <authorList>
            <person name="Cheng C.Y."/>
            <person name="Krishnakumar V."/>
            <person name="Chan A.P."/>
            <person name="Thibaud-Nissen F."/>
            <person name="Schobel S."/>
            <person name="Town C.D."/>
        </authorList>
    </citation>
    <scope>GENOME REANNOTATION</scope>
    <source>
        <strain>cv. Columbia</strain>
    </source>
</reference>
<reference key="3">
    <citation type="journal article" date="2008" name="BMC Genomics">
        <title>Genome-wide and expression analysis of protein phosphatase 2C in rice and Arabidopsis.</title>
        <authorList>
            <person name="Xue T."/>
            <person name="Wang D."/>
            <person name="Zhang S."/>
            <person name="Ehlting J."/>
            <person name="Ni F."/>
            <person name="Jacab S."/>
            <person name="Zheng C."/>
            <person name="Zhong Y."/>
        </authorList>
    </citation>
    <scope>GENE FAMILY</scope>
    <scope>NOMENCLATURE</scope>
</reference>
<sequence>MGHCFSLPSSQSEIHEDNEHGDGNVVCYGEEFGLDQDLPVHRLGSVCSIQGTKVLNQDHAVLYQGYGTRDTELCGVFDGHGKNGHMVSKMVRNRLPSVLLALKEELNQESNVCEEEASKWEKACFTAFRLIDRELNLQVFNCSFSGSTGVVAITQGDDLVIANLGDSRAVLGTMTEDGEIKAVQLTSDLTPDVPSEAERIRMCKGRVFAMKTEPSSQRVWLPNQNIPGLAMSRAFGDFRLKDHGVIAVPEISQHRITSKDQFLVLATDGVWDMLSNDEVVSLIWSSGKKQASAAKMVAEAAEAAWKKRLKYTKVDDITVICLFLQNKEQPS</sequence>
<gene>
    <name type="ordered locus">At5g26010</name>
    <name type="ORF">T1N24.8</name>
</gene>
<comment type="catalytic activity">
    <reaction>
        <text>O-phospho-L-seryl-[protein] + H2O = L-seryl-[protein] + phosphate</text>
        <dbReference type="Rhea" id="RHEA:20629"/>
        <dbReference type="Rhea" id="RHEA-COMP:9863"/>
        <dbReference type="Rhea" id="RHEA-COMP:11604"/>
        <dbReference type="ChEBI" id="CHEBI:15377"/>
        <dbReference type="ChEBI" id="CHEBI:29999"/>
        <dbReference type="ChEBI" id="CHEBI:43474"/>
        <dbReference type="ChEBI" id="CHEBI:83421"/>
        <dbReference type="EC" id="3.1.3.16"/>
    </reaction>
</comment>
<comment type="catalytic activity">
    <reaction>
        <text>O-phospho-L-threonyl-[protein] + H2O = L-threonyl-[protein] + phosphate</text>
        <dbReference type="Rhea" id="RHEA:47004"/>
        <dbReference type="Rhea" id="RHEA-COMP:11060"/>
        <dbReference type="Rhea" id="RHEA-COMP:11605"/>
        <dbReference type="ChEBI" id="CHEBI:15377"/>
        <dbReference type="ChEBI" id="CHEBI:30013"/>
        <dbReference type="ChEBI" id="CHEBI:43474"/>
        <dbReference type="ChEBI" id="CHEBI:61977"/>
        <dbReference type="EC" id="3.1.3.16"/>
    </reaction>
</comment>
<comment type="cofactor">
    <cofactor evidence="1">
        <name>Mg(2+)</name>
        <dbReference type="ChEBI" id="CHEBI:18420"/>
    </cofactor>
    <cofactor evidence="1">
        <name>Mn(2+)</name>
        <dbReference type="ChEBI" id="CHEBI:29035"/>
    </cofactor>
    <text evidence="1">Binds 2 magnesium or manganese ions per subunit.</text>
</comment>
<comment type="similarity">
    <text evidence="3">Belongs to the PP2C family.</text>
</comment>
<comment type="sequence caution" evidence="3">
    <conflict type="erroneous gene model prediction">
        <sequence resource="EMBL-CDS" id="AAD40128"/>
    </conflict>
</comment>
<feature type="chain" id="PRO_0000367992" description="Probable protein phosphatase 2C 72">
    <location>
        <begin position="1"/>
        <end position="331"/>
    </location>
</feature>
<feature type="domain" description="PPM-type phosphatase" evidence="2">
    <location>
        <begin position="43"/>
        <end position="324"/>
    </location>
</feature>
<feature type="binding site" evidence="1">
    <location>
        <position position="78"/>
    </location>
    <ligand>
        <name>Mn(2+)</name>
        <dbReference type="ChEBI" id="CHEBI:29035"/>
        <label>1</label>
    </ligand>
</feature>
<feature type="binding site" evidence="1">
    <location>
        <position position="78"/>
    </location>
    <ligand>
        <name>Mn(2+)</name>
        <dbReference type="ChEBI" id="CHEBI:29035"/>
        <label>2</label>
    </ligand>
</feature>
<feature type="binding site" evidence="1">
    <location>
        <position position="79"/>
    </location>
    <ligand>
        <name>Mn(2+)</name>
        <dbReference type="ChEBI" id="CHEBI:29035"/>
        <label>1</label>
    </ligand>
</feature>
<feature type="binding site" evidence="1">
    <location>
        <position position="268"/>
    </location>
    <ligand>
        <name>Mn(2+)</name>
        <dbReference type="ChEBI" id="CHEBI:29035"/>
        <label>2</label>
    </ligand>
</feature>
<feature type="binding site" evidence="1">
    <location>
        <position position="315"/>
    </location>
    <ligand>
        <name>Mn(2+)</name>
        <dbReference type="ChEBI" id="CHEBI:29035"/>
        <label>2</label>
    </ligand>
</feature>
<organism>
    <name type="scientific">Arabidopsis thaliana</name>
    <name type="common">Mouse-ear cress</name>
    <dbReference type="NCBI Taxonomy" id="3702"/>
    <lineage>
        <taxon>Eukaryota</taxon>
        <taxon>Viridiplantae</taxon>
        <taxon>Streptophyta</taxon>
        <taxon>Embryophyta</taxon>
        <taxon>Tracheophyta</taxon>
        <taxon>Spermatophyta</taxon>
        <taxon>Magnoliopsida</taxon>
        <taxon>eudicotyledons</taxon>
        <taxon>Gunneridae</taxon>
        <taxon>Pentapetalae</taxon>
        <taxon>rosids</taxon>
        <taxon>malvids</taxon>
        <taxon>Brassicales</taxon>
        <taxon>Brassicaceae</taxon>
        <taxon>Camelineae</taxon>
        <taxon>Arabidopsis</taxon>
    </lineage>
</organism>
<evidence type="ECO:0000250" key="1"/>
<evidence type="ECO:0000255" key="2">
    <source>
        <dbReference type="PROSITE-ProRule" id="PRU01082"/>
    </source>
</evidence>
<evidence type="ECO:0000305" key="3"/>
<proteinExistence type="evidence at transcript level"/>